<name>ILVC_CHLL3</name>
<comment type="function">
    <text evidence="1">Involved in the biosynthesis of branched-chain amino acids (BCAA). Catalyzes an alkyl-migration followed by a ketol-acid reduction of (S)-2-acetolactate (S2AL) to yield (R)-2,3-dihydroxy-isovalerate. In the isomerase reaction, S2AL is rearranged via a Mg-dependent methyl migration to produce 3-hydroxy-3-methyl-2-ketobutyrate (HMKB). In the reductase reaction, this 2-ketoacid undergoes a metal-dependent reduction by NADPH to yield (R)-2,3-dihydroxy-isovalerate.</text>
</comment>
<comment type="catalytic activity">
    <reaction evidence="1">
        <text>(2R)-2,3-dihydroxy-3-methylbutanoate + NADP(+) = (2S)-2-acetolactate + NADPH + H(+)</text>
        <dbReference type="Rhea" id="RHEA:22068"/>
        <dbReference type="ChEBI" id="CHEBI:15378"/>
        <dbReference type="ChEBI" id="CHEBI:49072"/>
        <dbReference type="ChEBI" id="CHEBI:57783"/>
        <dbReference type="ChEBI" id="CHEBI:58349"/>
        <dbReference type="ChEBI" id="CHEBI:58476"/>
        <dbReference type="EC" id="1.1.1.86"/>
    </reaction>
</comment>
<comment type="catalytic activity">
    <reaction evidence="1">
        <text>(2R,3R)-2,3-dihydroxy-3-methylpentanoate + NADP(+) = (S)-2-ethyl-2-hydroxy-3-oxobutanoate + NADPH + H(+)</text>
        <dbReference type="Rhea" id="RHEA:13493"/>
        <dbReference type="ChEBI" id="CHEBI:15378"/>
        <dbReference type="ChEBI" id="CHEBI:49256"/>
        <dbReference type="ChEBI" id="CHEBI:49258"/>
        <dbReference type="ChEBI" id="CHEBI:57783"/>
        <dbReference type="ChEBI" id="CHEBI:58349"/>
        <dbReference type="EC" id="1.1.1.86"/>
    </reaction>
</comment>
<comment type="cofactor">
    <cofactor evidence="1">
        <name>Mg(2+)</name>
        <dbReference type="ChEBI" id="CHEBI:18420"/>
    </cofactor>
    <text evidence="1">Binds 2 magnesium ions per subunit.</text>
</comment>
<comment type="pathway">
    <text evidence="1">Amino-acid biosynthesis; L-isoleucine biosynthesis; L-isoleucine from 2-oxobutanoate: step 2/4.</text>
</comment>
<comment type="pathway">
    <text evidence="1">Amino-acid biosynthesis; L-valine biosynthesis; L-valine from pyruvate: step 2/4.</text>
</comment>
<comment type="similarity">
    <text evidence="1">Belongs to the ketol-acid reductoisomerase family.</text>
</comment>
<sequence length="330" mass="35962">MNVYYEQDADLGRLQGKNIAVLGYGSQGHAHALNLKDSGMNVCVGLRPDSSSCAKAREAGLRVEPVADAVKWADIVMVLLPDQTQKAVYEAEIAPNMVAGNTLAFGHGFNIHYNQIVPPADVDVIMIAPKSPGHLVRRTYTEGNGVPCLIAVHQDATGEAKKTALAWAKGIGGTKAGVIETNFKDETETDLFGEQAVLCGGSAELIKAGFETLVEAGYPEELAYFECMHELKLIVDLYYEGGLSRMNYSVSDTAEYGGMTRGPRLITSAVKAEMKKVLEEVQDGRFAREFIDECNGGYKNLNRLREENSGHAIEKVGAKLRNMMSWLVRK</sequence>
<organism>
    <name type="scientific">Chlorobium luteolum (strain DSM 273 / BCRC 81028 / 2530)</name>
    <name type="common">Pelodictyon luteolum</name>
    <dbReference type="NCBI Taxonomy" id="319225"/>
    <lineage>
        <taxon>Bacteria</taxon>
        <taxon>Pseudomonadati</taxon>
        <taxon>Chlorobiota</taxon>
        <taxon>Chlorobiia</taxon>
        <taxon>Chlorobiales</taxon>
        <taxon>Chlorobiaceae</taxon>
        <taxon>Chlorobium/Pelodictyon group</taxon>
        <taxon>Pelodictyon</taxon>
    </lineage>
</organism>
<evidence type="ECO:0000255" key="1">
    <source>
        <dbReference type="HAMAP-Rule" id="MF_00435"/>
    </source>
</evidence>
<evidence type="ECO:0000255" key="2">
    <source>
        <dbReference type="PROSITE-ProRule" id="PRU01197"/>
    </source>
</evidence>
<evidence type="ECO:0000255" key="3">
    <source>
        <dbReference type="PROSITE-ProRule" id="PRU01198"/>
    </source>
</evidence>
<gene>
    <name evidence="1" type="primary">ilvC</name>
    <name type="ordered locus">Plut_0604</name>
</gene>
<protein>
    <recommendedName>
        <fullName evidence="1">Ketol-acid reductoisomerase (NADP(+))</fullName>
        <shortName evidence="1">KARI</shortName>
        <ecNumber evidence="1">1.1.1.86</ecNumber>
    </recommendedName>
    <alternativeName>
        <fullName evidence="1">Acetohydroxy-acid isomeroreductase</fullName>
        <shortName evidence="1">AHIR</shortName>
    </alternativeName>
    <alternativeName>
        <fullName evidence="1">Alpha-keto-beta-hydroxylacyl reductoisomerase</fullName>
    </alternativeName>
    <alternativeName>
        <fullName evidence="1">Ketol-acid reductoisomerase type 1</fullName>
    </alternativeName>
    <alternativeName>
        <fullName evidence="1">Ketol-acid reductoisomerase type I</fullName>
    </alternativeName>
</protein>
<dbReference type="EC" id="1.1.1.86" evidence="1"/>
<dbReference type="EMBL" id="CP000096">
    <property type="protein sequence ID" value="ABB23487.1"/>
    <property type="molecule type" value="Genomic_DNA"/>
</dbReference>
<dbReference type="RefSeq" id="WP_011357362.1">
    <property type="nucleotide sequence ID" value="NC_007512.1"/>
</dbReference>
<dbReference type="SMR" id="Q3B594"/>
<dbReference type="STRING" id="319225.Plut_0604"/>
<dbReference type="KEGG" id="plt:Plut_0604"/>
<dbReference type="eggNOG" id="COG0059">
    <property type="taxonomic scope" value="Bacteria"/>
</dbReference>
<dbReference type="HOGENOM" id="CLU_033821_0_1_10"/>
<dbReference type="OrthoDB" id="9804088at2"/>
<dbReference type="UniPathway" id="UPA00047">
    <property type="reaction ID" value="UER00056"/>
</dbReference>
<dbReference type="UniPathway" id="UPA00049">
    <property type="reaction ID" value="UER00060"/>
</dbReference>
<dbReference type="Proteomes" id="UP000002709">
    <property type="component" value="Chromosome"/>
</dbReference>
<dbReference type="GO" id="GO:0005829">
    <property type="term" value="C:cytosol"/>
    <property type="evidence" value="ECO:0007669"/>
    <property type="project" value="TreeGrafter"/>
</dbReference>
<dbReference type="GO" id="GO:0004455">
    <property type="term" value="F:ketol-acid reductoisomerase activity"/>
    <property type="evidence" value="ECO:0007669"/>
    <property type="project" value="UniProtKB-UniRule"/>
</dbReference>
<dbReference type="GO" id="GO:0000287">
    <property type="term" value="F:magnesium ion binding"/>
    <property type="evidence" value="ECO:0007669"/>
    <property type="project" value="UniProtKB-UniRule"/>
</dbReference>
<dbReference type="GO" id="GO:0050661">
    <property type="term" value="F:NADP binding"/>
    <property type="evidence" value="ECO:0007669"/>
    <property type="project" value="InterPro"/>
</dbReference>
<dbReference type="GO" id="GO:0009097">
    <property type="term" value="P:isoleucine biosynthetic process"/>
    <property type="evidence" value="ECO:0007669"/>
    <property type="project" value="UniProtKB-UniRule"/>
</dbReference>
<dbReference type="GO" id="GO:0009099">
    <property type="term" value="P:L-valine biosynthetic process"/>
    <property type="evidence" value="ECO:0007669"/>
    <property type="project" value="UniProtKB-UniRule"/>
</dbReference>
<dbReference type="FunFam" id="3.40.50.720:FF:000023">
    <property type="entry name" value="Ketol-acid reductoisomerase (NADP(+))"/>
    <property type="match status" value="1"/>
</dbReference>
<dbReference type="Gene3D" id="6.10.240.10">
    <property type="match status" value="1"/>
</dbReference>
<dbReference type="Gene3D" id="3.40.50.720">
    <property type="entry name" value="NAD(P)-binding Rossmann-like Domain"/>
    <property type="match status" value="1"/>
</dbReference>
<dbReference type="HAMAP" id="MF_00435">
    <property type="entry name" value="IlvC"/>
    <property type="match status" value="1"/>
</dbReference>
<dbReference type="InterPro" id="IPR008927">
    <property type="entry name" value="6-PGluconate_DH-like_C_sf"/>
</dbReference>
<dbReference type="InterPro" id="IPR013023">
    <property type="entry name" value="KARI"/>
</dbReference>
<dbReference type="InterPro" id="IPR000506">
    <property type="entry name" value="KARI_C"/>
</dbReference>
<dbReference type="InterPro" id="IPR013116">
    <property type="entry name" value="KARI_N"/>
</dbReference>
<dbReference type="InterPro" id="IPR014359">
    <property type="entry name" value="KARI_prok"/>
</dbReference>
<dbReference type="InterPro" id="IPR036291">
    <property type="entry name" value="NAD(P)-bd_dom_sf"/>
</dbReference>
<dbReference type="NCBIfam" id="TIGR00465">
    <property type="entry name" value="ilvC"/>
    <property type="match status" value="1"/>
</dbReference>
<dbReference type="NCBIfam" id="NF004017">
    <property type="entry name" value="PRK05479.1"/>
    <property type="match status" value="1"/>
</dbReference>
<dbReference type="NCBIfam" id="NF009940">
    <property type="entry name" value="PRK13403.1"/>
    <property type="match status" value="1"/>
</dbReference>
<dbReference type="PANTHER" id="PTHR21371">
    <property type="entry name" value="KETOL-ACID REDUCTOISOMERASE, MITOCHONDRIAL"/>
    <property type="match status" value="1"/>
</dbReference>
<dbReference type="PANTHER" id="PTHR21371:SF1">
    <property type="entry name" value="KETOL-ACID REDUCTOISOMERASE, MITOCHONDRIAL"/>
    <property type="match status" value="1"/>
</dbReference>
<dbReference type="Pfam" id="PF01450">
    <property type="entry name" value="KARI_C"/>
    <property type="match status" value="1"/>
</dbReference>
<dbReference type="Pfam" id="PF07991">
    <property type="entry name" value="KARI_N"/>
    <property type="match status" value="1"/>
</dbReference>
<dbReference type="PIRSF" id="PIRSF000116">
    <property type="entry name" value="IlvC_gammaproteo"/>
    <property type="match status" value="1"/>
</dbReference>
<dbReference type="SUPFAM" id="SSF48179">
    <property type="entry name" value="6-phosphogluconate dehydrogenase C-terminal domain-like"/>
    <property type="match status" value="1"/>
</dbReference>
<dbReference type="SUPFAM" id="SSF51735">
    <property type="entry name" value="NAD(P)-binding Rossmann-fold domains"/>
    <property type="match status" value="1"/>
</dbReference>
<dbReference type="PROSITE" id="PS51851">
    <property type="entry name" value="KARI_C"/>
    <property type="match status" value="1"/>
</dbReference>
<dbReference type="PROSITE" id="PS51850">
    <property type="entry name" value="KARI_N"/>
    <property type="match status" value="1"/>
</dbReference>
<feature type="chain" id="PRO_0000252772" description="Ketol-acid reductoisomerase (NADP(+))">
    <location>
        <begin position="1"/>
        <end position="330"/>
    </location>
</feature>
<feature type="domain" description="KARI N-terminal Rossmann" evidence="2">
    <location>
        <begin position="1"/>
        <end position="181"/>
    </location>
</feature>
<feature type="domain" description="KARI C-terminal knotted" evidence="3">
    <location>
        <begin position="182"/>
        <end position="327"/>
    </location>
</feature>
<feature type="active site" evidence="1">
    <location>
        <position position="107"/>
    </location>
</feature>
<feature type="binding site" evidence="1">
    <location>
        <begin position="24"/>
        <end position="27"/>
    </location>
    <ligand>
        <name>NADP(+)</name>
        <dbReference type="ChEBI" id="CHEBI:58349"/>
    </ligand>
</feature>
<feature type="binding site" evidence="1">
    <location>
        <position position="47"/>
    </location>
    <ligand>
        <name>NADP(+)</name>
        <dbReference type="ChEBI" id="CHEBI:58349"/>
    </ligand>
</feature>
<feature type="binding site" evidence="1">
    <location>
        <position position="50"/>
    </location>
    <ligand>
        <name>NADP(+)</name>
        <dbReference type="ChEBI" id="CHEBI:58349"/>
    </ligand>
</feature>
<feature type="binding site" evidence="1">
    <location>
        <position position="52"/>
    </location>
    <ligand>
        <name>NADP(+)</name>
        <dbReference type="ChEBI" id="CHEBI:58349"/>
    </ligand>
</feature>
<feature type="binding site" evidence="1">
    <location>
        <begin position="82"/>
        <end position="85"/>
    </location>
    <ligand>
        <name>NADP(+)</name>
        <dbReference type="ChEBI" id="CHEBI:58349"/>
    </ligand>
</feature>
<feature type="binding site" evidence="1">
    <location>
        <position position="133"/>
    </location>
    <ligand>
        <name>NADP(+)</name>
        <dbReference type="ChEBI" id="CHEBI:58349"/>
    </ligand>
</feature>
<feature type="binding site" evidence="1">
    <location>
        <position position="190"/>
    </location>
    <ligand>
        <name>Mg(2+)</name>
        <dbReference type="ChEBI" id="CHEBI:18420"/>
        <label>1</label>
    </ligand>
</feature>
<feature type="binding site" evidence="1">
    <location>
        <position position="190"/>
    </location>
    <ligand>
        <name>Mg(2+)</name>
        <dbReference type="ChEBI" id="CHEBI:18420"/>
        <label>2</label>
    </ligand>
</feature>
<feature type="binding site" evidence="1">
    <location>
        <position position="194"/>
    </location>
    <ligand>
        <name>Mg(2+)</name>
        <dbReference type="ChEBI" id="CHEBI:18420"/>
        <label>1</label>
    </ligand>
</feature>
<feature type="binding site" evidence="1">
    <location>
        <position position="226"/>
    </location>
    <ligand>
        <name>Mg(2+)</name>
        <dbReference type="ChEBI" id="CHEBI:18420"/>
        <label>2</label>
    </ligand>
</feature>
<feature type="binding site" evidence="1">
    <location>
        <position position="230"/>
    </location>
    <ligand>
        <name>Mg(2+)</name>
        <dbReference type="ChEBI" id="CHEBI:18420"/>
        <label>2</label>
    </ligand>
</feature>
<feature type="binding site" evidence="1">
    <location>
        <position position="251"/>
    </location>
    <ligand>
        <name>substrate</name>
    </ligand>
</feature>
<proteinExistence type="inferred from homology"/>
<accession>Q3B594</accession>
<keyword id="KW-0028">Amino-acid biosynthesis</keyword>
<keyword id="KW-0100">Branched-chain amino acid biosynthesis</keyword>
<keyword id="KW-0460">Magnesium</keyword>
<keyword id="KW-0479">Metal-binding</keyword>
<keyword id="KW-0521">NADP</keyword>
<keyword id="KW-0560">Oxidoreductase</keyword>
<keyword id="KW-1185">Reference proteome</keyword>
<reference key="1">
    <citation type="submission" date="2005-08" db="EMBL/GenBank/DDBJ databases">
        <title>Complete sequence of Pelodictyon luteolum DSM 273.</title>
        <authorList>
            <consortium name="US DOE Joint Genome Institute"/>
            <person name="Copeland A."/>
            <person name="Lucas S."/>
            <person name="Lapidus A."/>
            <person name="Barry K."/>
            <person name="Detter J.C."/>
            <person name="Glavina T."/>
            <person name="Hammon N."/>
            <person name="Israni S."/>
            <person name="Pitluck S."/>
            <person name="Bryant D."/>
            <person name="Schmutz J."/>
            <person name="Larimer F."/>
            <person name="Land M."/>
            <person name="Kyrpides N."/>
            <person name="Ivanova N."/>
            <person name="Richardson P."/>
        </authorList>
    </citation>
    <scope>NUCLEOTIDE SEQUENCE [LARGE SCALE GENOMIC DNA]</scope>
    <source>
        <strain>DSM 273 / BCRC 81028 / 2530</strain>
    </source>
</reference>